<organism>
    <name type="scientific">Crotalus viridis viridis</name>
    <name type="common">Prairie rattlesnake</name>
    <dbReference type="NCBI Taxonomy" id="8742"/>
    <lineage>
        <taxon>Eukaryota</taxon>
        <taxon>Metazoa</taxon>
        <taxon>Chordata</taxon>
        <taxon>Craniata</taxon>
        <taxon>Vertebrata</taxon>
        <taxon>Euteleostomi</taxon>
        <taxon>Lepidosauria</taxon>
        <taxon>Squamata</taxon>
        <taxon>Bifurcata</taxon>
        <taxon>Unidentata</taxon>
        <taxon>Episquamata</taxon>
        <taxon>Toxicofera</taxon>
        <taxon>Serpentes</taxon>
        <taxon>Colubroidea</taxon>
        <taxon>Viperidae</taxon>
        <taxon>Crotalinae</taxon>
        <taxon>Crotalus</taxon>
    </lineage>
</organism>
<sequence>NPCCDAATCKLKSGSQCGHGDCCEQCKFSKSGTECRASMSECDPAEHCTGQSSECPADVFHKNGQPCLDNYGYCYNGNCPIMYHQCYDLFGADVYEAEDSCFERNQKGNYYGYCRKENGNKIPCAPEDVKCGRLYCKDNSPGQNNPCKMFYSNEDEHKGMVLPGTKCADGKVCSNRQ</sequence>
<accession>A2CJE3</accession>
<dbReference type="EC" id="3.4.24.-"/>
<dbReference type="EMBL" id="DQ676500">
    <property type="protein sequence ID" value="ABG77584.1"/>
    <property type="molecule type" value="mRNA"/>
</dbReference>
<dbReference type="SMR" id="A2CJE3"/>
<dbReference type="GO" id="GO:0005576">
    <property type="term" value="C:extracellular region"/>
    <property type="evidence" value="ECO:0007669"/>
    <property type="project" value="UniProtKB-SubCell"/>
</dbReference>
<dbReference type="GO" id="GO:0005886">
    <property type="term" value="C:plasma membrane"/>
    <property type="evidence" value="ECO:0007669"/>
    <property type="project" value="TreeGrafter"/>
</dbReference>
<dbReference type="GO" id="GO:0046872">
    <property type="term" value="F:metal ion binding"/>
    <property type="evidence" value="ECO:0007669"/>
    <property type="project" value="UniProtKB-KW"/>
</dbReference>
<dbReference type="GO" id="GO:0008237">
    <property type="term" value="F:metallopeptidase activity"/>
    <property type="evidence" value="ECO:0007669"/>
    <property type="project" value="UniProtKB-KW"/>
</dbReference>
<dbReference type="GO" id="GO:0090729">
    <property type="term" value="F:toxin activity"/>
    <property type="evidence" value="ECO:0007669"/>
    <property type="project" value="UniProtKB-KW"/>
</dbReference>
<dbReference type="GO" id="GO:0006508">
    <property type="term" value="P:proteolysis"/>
    <property type="evidence" value="ECO:0007669"/>
    <property type="project" value="UniProtKB-KW"/>
</dbReference>
<dbReference type="Gene3D" id="4.10.70.10">
    <property type="entry name" value="Disintegrin domain"/>
    <property type="match status" value="1"/>
</dbReference>
<dbReference type="InterPro" id="IPR006586">
    <property type="entry name" value="ADAM_Cys-rich"/>
</dbReference>
<dbReference type="InterPro" id="IPR018358">
    <property type="entry name" value="Disintegrin_CS"/>
</dbReference>
<dbReference type="InterPro" id="IPR001762">
    <property type="entry name" value="Disintegrin_dom"/>
</dbReference>
<dbReference type="InterPro" id="IPR036436">
    <property type="entry name" value="Disintegrin_dom_sf"/>
</dbReference>
<dbReference type="PANTHER" id="PTHR11905">
    <property type="entry name" value="ADAM A DISINTEGRIN AND METALLOPROTEASE DOMAIN"/>
    <property type="match status" value="1"/>
</dbReference>
<dbReference type="PANTHER" id="PTHR11905:SF32">
    <property type="entry name" value="DISINTEGRIN AND METALLOPROTEINASE DOMAIN-CONTAINING PROTEIN 28"/>
    <property type="match status" value="1"/>
</dbReference>
<dbReference type="Pfam" id="PF08516">
    <property type="entry name" value="ADAM_CR"/>
    <property type="match status" value="1"/>
</dbReference>
<dbReference type="Pfam" id="PF00200">
    <property type="entry name" value="Disintegrin"/>
    <property type="match status" value="1"/>
</dbReference>
<dbReference type="PRINTS" id="PR00289">
    <property type="entry name" value="DISINTEGRIN"/>
</dbReference>
<dbReference type="SMART" id="SM00608">
    <property type="entry name" value="ACR"/>
    <property type="match status" value="1"/>
</dbReference>
<dbReference type="SMART" id="SM00050">
    <property type="entry name" value="DISIN"/>
    <property type="match status" value="1"/>
</dbReference>
<dbReference type="SUPFAM" id="SSF57552">
    <property type="entry name" value="Blood coagulation inhibitor (disintegrin)"/>
    <property type="match status" value="1"/>
</dbReference>
<dbReference type="PROSITE" id="PS00427">
    <property type="entry name" value="DISINTEGRIN_1"/>
    <property type="match status" value="1"/>
</dbReference>
<dbReference type="PROSITE" id="PS50214">
    <property type="entry name" value="DISINTEGRIN_2"/>
    <property type="match status" value="1"/>
</dbReference>
<comment type="function">
    <text evidence="1">Snake venom metalloproteinase that impairs hemostasis in the envenomed animal.</text>
</comment>
<comment type="cofactor">
    <cofactor evidence="1">
        <name>Zn(2+)</name>
        <dbReference type="ChEBI" id="CHEBI:29105"/>
    </cofactor>
    <text evidence="1">Binds 1 zinc ion per subunit.</text>
</comment>
<comment type="subunit">
    <text evidence="1">Monomer.</text>
</comment>
<comment type="subcellular location">
    <subcellularLocation>
        <location evidence="1">Secreted</location>
    </subcellularLocation>
</comment>
<comment type="tissue specificity">
    <text>Expressed by the venom gland.</text>
</comment>
<comment type="PTM">
    <text evidence="1">Glycosylated.</text>
</comment>
<comment type="similarity">
    <text evidence="3">Belongs to the venom metalloproteinase (M12B) family. P-III subfamily. P-IIIa sub-subfamily.</text>
</comment>
<evidence type="ECO:0000250" key="1"/>
<evidence type="ECO:0000255" key="2">
    <source>
        <dbReference type="PROSITE-ProRule" id="PRU00068"/>
    </source>
</evidence>
<evidence type="ECO:0000305" key="3"/>
<feature type="chain" id="PRO_0000406577" description="Zinc metalloproteinase-disintegrin-like viristiarin">
    <location>
        <begin position="1" status="less than"/>
        <end position="177" status="greater than"/>
    </location>
</feature>
<feature type="domain" description="Disintegrin" evidence="2">
    <location>
        <begin position="1" status="less than"/>
        <end position="63"/>
    </location>
</feature>
<feature type="short sequence motif" description="D/ECD-tripeptide">
    <location>
        <begin position="41"/>
        <end position="43"/>
    </location>
</feature>
<feature type="binding site" evidence="1">
    <location>
        <position position="43"/>
    </location>
    <ligand>
        <name>Ca(2+)</name>
        <dbReference type="ChEBI" id="CHEBI:29108"/>
    </ligand>
</feature>
<feature type="binding site" evidence="1">
    <location>
        <position position="44"/>
    </location>
    <ligand>
        <name>Ca(2+)</name>
        <dbReference type="ChEBI" id="CHEBI:29108"/>
    </ligand>
</feature>
<feature type="binding site" evidence="1">
    <location>
        <position position="46"/>
    </location>
    <ligand>
        <name>Ca(2+)</name>
        <dbReference type="ChEBI" id="CHEBI:29108"/>
    </ligand>
</feature>
<feature type="binding site" evidence="1">
    <location>
        <position position="58"/>
    </location>
    <ligand>
        <name>Ca(2+)</name>
        <dbReference type="ChEBI" id="CHEBI:29108"/>
    </ligand>
</feature>
<feature type="binding site" evidence="1">
    <location>
        <position position="59"/>
    </location>
    <ligand>
        <name>Ca(2+)</name>
        <dbReference type="ChEBI" id="CHEBI:29108"/>
    </ligand>
</feature>
<feature type="disulfide bond" evidence="1">
    <location>
        <begin position="3"/>
        <end position="26"/>
    </location>
</feature>
<feature type="disulfide bond" evidence="1">
    <location>
        <begin position="17"/>
        <end position="23"/>
    </location>
</feature>
<feature type="disulfide bond" evidence="1">
    <location>
        <begin position="22"/>
        <end position="48"/>
    </location>
</feature>
<feature type="disulfide bond" evidence="1">
    <location>
        <begin position="35"/>
        <end position="55"/>
    </location>
</feature>
<feature type="disulfide bond" evidence="1">
    <location>
        <begin position="42"/>
        <end position="74"/>
    </location>
</feature>
<feature type="disulfide bond" evidence="1">
    <location>
        <begin position="67"/>
        <end position="79"/>
    </location>
</feature>
<feature type="disulfide bond" evidence="1">
    <location>
        <begin position="86"/>
        <end position="136"/>
    </location>
</feature>
<feature type="disulfide bond" evidence="1">
    <location>
        <begin position="101"/>
        <end position="147"/>
    </location>
</feature>
<feature type="disulfide bond" evidence="1">
    <location>
        <begin position="114"/>
        <end position="124"/>
    </location>
</feature>
<feature type="disulfide bond" evidence="1">
    <location>
        <begin position="131"/>
        <end position="173"/>
    </location>
</feature>
<feature type="non-terminal residue">
    <location>
        <position position="1"/>
    </location>
</feature>
<feature type="non-terminal residue">
    <location>
        <position position="177"/>
    </location>
</feature>
<keyword id="KW-0106">Calcium</keyword>
<keyword id="KW-1015">Disulfide bond</keyword>
<keyword id="KW-0325">Glycoprotein</keyword>
<keyword id="KW-1199">Hemostasis impairing toxin</keyword>
<keyword id="KW-0378">Hydrolase</keyword>
<keyword id="KW-0479">Metal-binding</keyword>
<keyword id="KW-0482">Metalloprotease</keyword>
<keyword id="KW-0645">Protease</keyword>
<keyword id="KW-0964">Secreted</keyword>
<keyword id="KW-0800">Toxin</keyword>
<keyword id="KW-0862">Zinc</keyword>
<name>VM3V_CROVV</name>
<proteinExistence type="evidence at transcript level"/>
<reference key="1">
    <citation type="journal article" date="2007" name="Gene">
        <title>Molecular evolution of PIII-SVMP and RGD disintegrin genes from the genus Crotalus.</title>
        <authorList>
            <person name="Soto J.G."/>
            <person name="White S.A."/>
            <person name="Reyes S.R."/>
            <person name="Regalado R."/>
            <person name="Sanchez E.E."/>
            <person name="Perez J.C."/>
        </authorList>
    </citation>
    <scope>NUCLEOTIDE SEQUENCE [MRNA]</scope>
    <source>
        <tissue>Venom gland</tissue>
    </source>
</reference>
<protein>
    <recommendedName>
        <fullName>Zinc metalloproteinase-disintegrin-like viristiarin</fullName>
        <ecNumber>3.4.24.-</ecNumber>
    </recommendedName>
    <alternativeName>
        <fullName>Snake venom metalloproteinase</fullName>
        <shortName>SVMP</shortName>
    </alternativeName>
</protein>